<keyword id="KW-0067">ATP-binding</keyword>
<keyword id="KW-0227">DNA damage</keyword>
<keyword id="KW-0233">DNA recombination</keyword>
<keyword id="KW-0238">DNA-binding</keyword>
<keyword id="KW-0547">Nucleotide-binding</keyword>
<comment type="function">
    <text evidence="1">Involved in DNA repair and in homologous recombination. Binds and assemble on single-stranded DNA to form a nucleoprotein filament. Hydrolyzes ATP in a ssDNA-dependent manner and promotes DNA strand exchange between homologous DNA molecules.</text>
</comment>
<comment type="similarity">
    <text evidence="1">Belongs to the eukaryotic RecA-like protein family.</text>
</comment>
<evidence type="ECO:0000255" key="1">
    <source>
        <dbReference type="HAMAP-Rule" id="MF_00348"/>
    </source>
</evidence>
<protein>
    <recommendedName>
        <fullName evidence="1">DNA repair and recombination protein RadA</fullName>
    </recommendedName>
</protein>
<feature type="chain" id="PRO_1000048387" description="DNA repair and recombination protein RadA">
    <location>
        <begin position="1"/>
        <end position="322"/>
    </location>
</feature>
<feature type="binding site" evidence="1">
    <location>
        <begin position="105"/>
        <end position="112"/>
    </location>
    <ligand>
        <name>ATP</name>
        <dbReference type="ChEBI" id="CHEBI:30616"/>
    </ligand>
</feature>
<name>RADA_METM5</name>
<reference key="1">
    <citation type="submission" date="2007-03" db="EMBL/GenBank/DDBJ databases">
        <title>Complete sequence of chromosome of Methanococcus maripaludis C5.</title>
        <authorList>
            <consortium name="US DOE Joint Genome Institute"/>
            <person name="Copeland A."/>
            <person name="Lucas S."/>
            <person name="Lapidus A."/>
            <person name="Barry K."/>
            <person name="Glavina del Rio T."/>
            <person name="Dalin E."/>
            <person name="Tice H."/>
            <person name="Pitluck S."/>
            <person name="Chertkov O."/>
            <person name="Brettin T."/>
            <person name="Bruce D."/>
            <person name="Han C."/>
            <person name="Detter J.C."/>
            <person name="Schmutz J."/>
            <person name="Larimer F."/>
            <person name="Land M."/>
            <person name="Hauser L."/>
            <person name="Kyrpides N."/>
            <person name="Mikhailova N."/>
            <person name="Sieprawska-Lupa M."/>
            <person name="Whitman W.B."/>
            <person name="Richardson P."/>
        </authorList>
    </citation>
    <scope>NUCLEOTIDE SEQUENCE [LARGE SCALE GENOMIC DNA]</scope>
    <source>
        <strain>C5 / ATCC BAA-1333</strain>
    </source>
</reference>
<dbReference type="EMBL" id="CP000609">
    <property type="protein sequence ID" value="ABO34684.1"/>
    <property type="molecule type" value="Genomic_DNA"/>
</dbReference>
<dbReference type="RefSeq" id="WP_011868139.1">
    <property type="nucleotide sequence ID" value="NC_009135.1"/>
</dbReference>
<dbReference type="SMR" id="A4FWV5"/>
<dbReference type="STRING" id="402880.MmarC5_0368"/>
<dbReference type="GeneID" id="4928283"/>
<dbReference type="KEGG" id="mmq:MmarC5_0368"/>
<dbReference type="eggNOG" id="arCOG00415">
    <property type="taxonomic scope" value="Archaea"/>
</dbReference>
<dbReference type="HOGENOM" id="CLU_041732_0_0_2"/>
<dbReference type="OrthoDB" id="31129at2157"/>
<dbReference type="Proteomes" id="UP000000253">
    <property type="component" value="Chromosome"/>
</dbReference>
<dbReference type="GO" id="GO:0005524">
    <property type="term" value="F:ATP binding"/>
    <property type="evidence" value="ECO:0007669"/>
    <property type="project" value="UniProtKB-UniRule"/>
</dbReference>
<dbReference type="GO" id="GO:0016887">
    <property type="term" value="F:ATP hydrolysis activity"/>
    <property type="evidence" value="ECO:0007669"/>
    <property type="project" value="InterPro"/>
</dbReference>
<dbReference type="GO" id="GO:0140664">
    <property type="term" value="F:ATP-dependent DNA damage sensor activity"/>
    <property type="evidence" value="ECO:0007669"/>
    <property type="project" value="InterPro"/>
</dbReference>
<dbReference type="GO" id="GO:0003684">
    <property type="term" value="F:damaged DNA binding"/>
    <property type="evidence" value="ECO:0007669"/>
    <property type="project" value="UniProtKB-UniRule"/>
</dbReference>
<dbReference type="GO" id="GO:0006310">
    <property type="term" value="P:DNA recombination"/>
    <property type="evidence" value="ECO:0007669"/>
    <property type="project" value="UniProtKB-UniRule"/>
</dbReference>
<dbReference type="GO" id="GO:0006281">
    <property type="term" value="P:DNA repair"/>
    <property type="evidence" value="ECO:0007669"/>
    <property type="project" value="UniProtKB-UniRule"/>
</dbReference>
<dbReference type="CDD" id="cd19515">
    <property type="entry name" value="archRadA"/>
    <property type="match status" value="1"/>
</dbReference>
<dbReference type="FunFam" id="3.40.50.300:FF:002052">
    <property type="entry name" value="DNA repair protein RAD51 homolog"/>
    <property type="match status" value="1"/>
</dbReference>
<dbReference type="Gene3D" id="1.10.150.20">
    <property type="entry name" value="5' to 3' exonuclease, C-terminal subdomain"/>
    <property type="match status" value="1"/>
</dbReference>
<dbReference type="Gene3D" id="3.40.50.300">
    <property type="entry name" value="P-loop containing nucleotide triphosphate hydrolases"/>
    <property type="match status" value="1"/>
</dbReference>
<dbReference type="HAMAP" id="MF_00348">
    <property type="entry name" value="RadA_arch"/>
    <property type="match status" value="1"/>
</dbReference>
<dbReference type="InterPro" id="IPR003593">
    <property type="entry name" value="AAA+_ATPase"/>
</dbReference>
<dbReference type="InterPro" id="IPR013632">
    <property type="entry name" value="DNA_recomb/repair_Rad51_C"/>
</dbReference>
<dbReference type="InterPro" id="IPR011938">
    <property type="entry name" value="DNA_recomb/repair_RadA"/>
</dbReference>
<dbReference type="InterPro" id="IPR016467">
    <property type="entry name" value="DNA_recomb/repair_RecA-like"/>
</dbReference>
<dbReference type="InterPro" id="IPR010995">
    <property type="entry name" value="DNA_repair_Rad51/TF_NusA_a-hlx"/>
</dbReference>
<dbReference type="InterPro" id="IPR003583">
    <property type="entry name" value="Hlx-hairpin-Hlx_DNA-bd_motif"/>
</dbReference>
<dbReference type="InterPro" id="IPR027417">
    <property type="entry name" value="P-loop_NTPase"/>
</dbReference>
<dbReference type="InterPro" id="IPR020588">
    <property type="entry name" value="RecA_ATP-bd"/>
</dbReference>
<dbReference type="InterPro" id="IPR020587">
    <property type="entry name" value="RecA_monomer-monomer_interface"/>
</dbReference>
<dbReference type="NCBIfam" id="NF003301">
    <property type="entry name" value="PRK04301.1"/>
    <property type="match status" value="1"/>
</dbReference>
<dbReference type="NCBIfam" id="TIGR02236">
    <property type="entry name" value="recomb_radA"/>
    <property type="match status" value="1"/>
</dbReference>
<dbReference type="PANTHER" id="PTHR22942:SF30">
    <property type="entry name" value="MEIOTIC RECOMBINATION PROTEIN DMC1_LIM15 HOMOLOG"/>
    <property type="match status" value="1"/>
</dbReference>
<dbReference type="PANTHER" id="PTHR22942">
    <property type="entry name" value="RECA/RAD51/RADA DNA STRAND-PAIRING FAMILY MEMBER"/>
    <property type="match status" value="1"/>
</dbReference>
<dbReference type="Pfam" id="PF14520">
    <property type="entry name" value="HHH_5"/>
    <property type="match status" value="1"/>
</dbReference>
<dbReference type="Pfam" id="PF08423">
    <property type="entry name" value="Rad51"/>
    <property type="match status" value="1"/>
</dbReference>
<dbReference type="PIRSF" id="PIRSF005856">
    <property type="entry name" value="Rad51"/>
    <property type="match status" value="1"/>
</dbReference>
<dbReference type="SMART" id="SM00382">
    <property type="entry name" value="AAA"/>
    <property type="match status" value="1"/>
</dbReference>
<dbReference type="SMART" id="SM00278">
    <property type="entry name" value="HhH1"/>
    <property type="match status" value="2"/>
</dbReference>
<dbReference type="SUPFAM" id="SSF52540">
    <property type="entry name" value="P-loop containing nucleoside triphosphate hydrolases"/>
    <property type="match status" value="1"/>
</dbReference>
<dbReference type="SUPFAM" id="SSF47794">
    <property type="entry name" value="Rad51 N-terminal domain-like"/>
    <property type="match status" value="1"/>
</dbReference>
<dbReference type="PROSITE" id="PS50162">
    <property type="entry name" value="RECA_2"/>
    <property type="match status" value="1"/>
</dbReference>
<dbReference type="PROSITE" id="PS50163">
    <property type="entry name" value="RECA_3"/>
    <property type="match status" value="1"/>
</dbReference>
<sequence length="322" mass="35211">MADVLTELPGVGPSTAEKLIEAGYLDFMKIATSTIGELTDIEGISEKAAAKMIMAARDLCDLGFKSGVELLKQRQSVWRLSTGSKELDTVLAGGLESQSVTEFAGMYGSGKTQIMHQTCVNLQMAEKIFADLEGVVEEEMENPKAVYIDTEGTFRPERVVQMAEGAGIDGQTVLDNTFVARAYNSDMQMLFAEKIEDLIKGGNNIKLVIIDSLTSTFRNEFTGRGKLAERQQKLGRHMATLNKLADLYNCIVLVTNQVAAKPDAFFGVAEQAIGGHVVGHAATFRFFLRKSKGDKRVAKLYDSPHLPDSEAVFRITEKGIQD</sequence>
<accession>A4FWV5</accession>
<gene>
    <name evidence="1" type="primary">radA</name>
    <name type="ordered locus">MmarC5_0368</name>
</gene>
<proteinExistence type="inferred from homology"/>
<organism>
    <name type="scientific">Methanococcus maripaludis (strain C5 / ATCC BAA-1333)</name>
    <dbReference type="NCBI Taxonomy" id="402880"/>
    <lineage>
        <taxon>Archaea</taxon>
        <taxon>Methanobacteriati</taxon>
        <taxon>Methanobacteriota</taxon>
        <taxon>Methanomada group</taxon>
        <taxon>Methanococci</taxon>
        <taxon>Methanococcales</taxon>
        <taxon>Methanococcaceae</taxon>
        <taxon>Methanococcus</taxon>
    </lineage>
</organism>